<keyword id="KW-0002">3D-structure</keyword>
<keyword id="KW-0012">Acyltransferase</keyword>
<keyword id="KW-0903">Direct protein sequencing</keyword>
<keyword id="KW-1185">Reference proteome</keyword>
<keyword id="KW-0964">Secreted</keyword>
<keyword id="KW-0732">Signal</keyword>
<keyword id="KW-0808">Transferase</keyword>
<organism>
    <name type="scientific">Mycobacterium tuberculosis (strain ATCC 25618 / H37Rv)</name>
    <dbReference type="NCBI Taxonomy" id="83332"/>
    <lineage>
        <taxon>Bacteria</taxon>
        <taxon>Bacillati</taxon>
        <taxon>Actinomycetota</taxon>
        <taxon>Actinomycetes</taxon>
        <taxon>Mycobacteriales</taxon>
        <taxon>Mycobacteriaceae</taxon>
        <taxon>Mycobacterium</taxon>
        <taxon>Mycobacterium tuberculosis complex</taxon>
    </lineage>
</organism>
<accession>P9WQN9</accession>
<accession>L0T2K1</accession>
<accession>P0A4V4</accession>
<accession>P31953</accession>
<accession>P96806</accession>
<evidence type="ECO:0000250" key="1"/>
<evidence type="ECO:0000255" key="2"/>
<evidence type="ECO:0000269" key="3">
    <source>
    </source>
</evidence>
<evidence type="ECO:0000269" key="4">
    <source>
    </source>
</evidence>
<evidence type="ECO:0000269" key="5">
    <source>
    </source>
</evidence>
<evidence type="ECO:0000269" key="6">
    <source>
    </source>
</evidence>
<evidence type="ECO:0000269" key="7">
    <source>
    </source>
</evidence>
<evidence type="ECO:0000269" key="8">
    <source>
    </source>
</evidence>
<evidence type="ECO:0000305" key="9"/>
<evidence type="ECO:0007829" key="10">
    <source>
        <dbReference type="PDB" id="4QDX"/>
    </source>
</evidence>
<evidence type="ECO:0007829" key="11">
    <source>
        <dbReference type="PDB" id="4QEK"/>
    </source>
</evidence>
<evidence type="ECO:0007829" key="12">
    <source>
        <dbReference type="PDB" id="5KWI"/>
    </source>
</evidence>
<evidence type="ECO:0007829" key="13">
    <source>
        <dbReference type="PDB" id="7MYG"/>
    </source>
</evidence>
<proteinExistence type="evidence at protein level"/>
<protein>
    <recommendedName>
        <fullName>Diacylglycerol acyltransferase/mycolyltransferase Ag85C</fullName>
        <shortName>DGAT</shortName>
        <ecNumber>2.3.1.122</ecNumber>
        <ecNumber>2.3.1.20</ecNumber>
    </recommendedName>
    <alternativeName>
        <fullName>Acyl-CoA:diacylglycerol acyltransferase</fullName>
    </alternativeName>
    <alternativeName>
        <fullName>Antigen 85 complex C</fullName>
        <shortName>85C</shortName>
        <shortName>Ag85C</shortName>
    </alternativeName>
    <alternativeName>
        <fullName>Fibronectin-binding protein C</fullName>
        <shortName>Fbps C</shortName>
    </alternativeName>
</protein>
<reference key="1">
    <citation type="journal article" date="1991" name="Infect. Immun.">
        <title>The genes coding for the antigen 85 complexes of Mycobacterium tuberculosis and Mycobacterium bovis BCG are members of a gene family: cloning, sequence determination, and genomic organization of the gene coding for antigen 85-C of M. tuberculosis.</title>
        <authorList>
            <person name="Content J."/>
            <person name="la Cuvellerie A."/>
            <person name="de Wit L."/>
            <person name="Vincent-Levy-Frebault V."/>
            <person name="Ooms J."/>
            <person name="de Bruyn J."/>
        </authorList>
    </citation>
    <scope>NUCLEOTIDE SEQUENCE [GENOMIC DNA]</scope>
    <source>
        <strain>ATCC 35801 / TMC 107 / Erdman</strain>
    </source>
</reference>
<reference key="2">
    <citation type="journal article" date="1998" name="Nature">
        <title>Deciphering the biology of Mycobacterium tuberculosis from the complete genome sequence.</title>
        <authorList>
            <person name="Cole S.T."/>
            <person name="Brosch R."/>
            <person name="Parkhill J."/>
            <person name="Garnier T."/>
            <person name="Churcher C.M."/>
            <person name="Harris D.E."/>
            <person name="Gordon S.V."/>
            <person name="Eiglmeier K."/>
            <person name="Gas S."/>
            <person name="Barry C.E. III"/>
            <person name="Tekaia F."/>
            <person name="Badcock K."/>
            <person name="Basham D."/>
            <person name="Brown D."/>
            <person name="Chillingworth T."/>
            <person name="Connor R."/>
            <person name="Davies R.M."/>
            <person name="Devlin K."/>
            <person name="Feltwell T."/>
            <person name="Gentles S."/>
            <person name="Hamlin N."/>
            <person name="Holroyd S."/>
            <person name="Hornsby T."/>
            <person name="Jagels K."/>
            <person name="Krogh A."/>
            <person name="McLean J."/>
            <person name="Moule S."/>
            <person name="Murphy L.D."/>
            <person name="Oliver S."/>
            <person name="Osborne J."/>
            <person name="Quail M.A."/>
            <person name="Rajandream M.A."/>
            <person name="Rogers J."/>
            <person name="Rutter S."/>
            <person name="Seeger K."/>
            <person name="Skelton S."/>
            <person name="Squares S."/>
            <person name="Squares R."/>
            <person name="Sulston J.E."/>
            <person name="Taylor K."/>
            <person name="Whitehead S."/>
            <person name="Barrell B.G."/>
        </authorList>
    </citation>
    <scope>NUCLEOTIDE SEQUENCE [LARGE SCALE GENOMIC DNA]</scope>
    <source>
        <strain>ATCC 25618 / H37Rv</strain>
    </source>
</reference>
<reference key="3">
    <citation type="journal article" date="1990" name="Infect. Immun.">
        <title>Evidence for three separate genes encoding the proteins of the mycobacterial antigen 85 complex.</title>
        <authorList>
            <person name="Wiker H.G."/>
            <person name="Sletten K."/>
            <person name="Nagai S."/>
            <person name="Harboe M."/>
        </authorList>
    </citation>
    <scope>PROTEIN SEQUENCE OF 47-56</scope>
</reference>
<reference key="4">
    <citation type="journal article" date="1991" name="Infect. Immun.">
        <title>Genetic and immunological analysis of Mycobacterium tuberculosis fibronectin-binding proteins.</title>
        <authorList>
            <person name="Abou-Zeid C."/>
            <person name="Garbe T."/>
            <person name="Lathigra R."/>
            <person name="Wiker H.G."/>
            <person name="Harboe M."/>
            <person name="Rook G.A."/>
            <person name="Young D.B."/>
        </authorList>
    </citation>
    <scope>FUNCTION IN THE FIBRONECTIN-BINDING</scope>
</reference>
<reference key="5">
    <citation type="journal article" date="1997" name="Science">
        <title>Role of the major antigen of Mycobacterium tuberculosis in cell wall biogenesis.</title>
        <authorList>
            <person name="Belisle J.T."/>
            <person name="Vissa V.D."/>
            <person name="Sievert T."/>
            <person name="Takayama K."/>
            <person name="Brennan P.J."/>
            <person name="Besra G.S."/>
        </authorList>
    </citation>
    <scope>FUNCTION AS A MYCOLYLTRANSFERASE</scope>
    <scope>MUTAGENESIS OF SER-170</scope>
    <scope>ACTIVITY REGULATION</scope>
    <scope>NOMENCLATURE</scope>
</reference>
<reference key="6">
    <citation type="journal article" date="1999" name="Mol. Microbiol.">
        <title>Inactivation of the antigen 85C gene profoundly affects the mycolate content and alters the permeability of the Mycobacterium tuberculosis cell envelope.</title>
        <authorList>
            <person name="Jackson M."/>
            <person name="Raynaud C."/>
            <person name="Laneelle M.A."/>
            <person name="Guilhot C."/>
            <person name="Laurent-Winter C."/>
            <person name="Ensergueix D."/>
            <person name="Gicquel B."/>
            <person name="Daffe M."/>
        </authorList>
    </citation>
    <scope>DISRUPTION PHENOTYPE</scope>
</reference>
<reference key="7">
    <citation type="journal article" date="2008" name="BMC Syst. Biol.">
        <title>targetTB: a target identification pipeline for Mycobacterium tuberculosis through an interactome, reactome and genome-scale structural analysis.</title>
        <authorList>
            <person name="Raman K."/>
            <person name="Yeturu K."/>
            <person name="Chandra N."/>
        </authorList>
    </citation>
    <scope>IDENTIFICATION AS A DRUG TARGET [LARGE SCALE ANALYSIS]</scope>
</reference>
<reference key="8">
    <citation type="journal article" date="2011" name="Mol. Cell. Proteomics">
        <title>Proteogenomic analysis of Mycobacterium tuberculosis by high resolution mass spectrometry.</title>
        <authorList>
            <person name="Kelkar D.S."/>
            <person name="Kumar D."/>
            <person name="Kumar P."/>
            <person name="Balakrishnan L."/>
            <person name="Muthusamy B."/>
            <person name="Yadav A.K."/>
            <person name="Shrivastava P."/>
            <person name="Marimuthu A."/>
            <person name="Anand S."/>
            <person name="Sundaram H."/>
            <person name="Kingsbury R."/>
            <person name="Harsha H.C."/>
            <person name="Nair B."/>
            <person name="Prasad T.S."/>
            <person name="Chauhan D.S."/>
            <person name="Katoch K."/>
            <person name="Katoch V.M."/>
            <person name="Kumar P."/>
            <person name="Chaerkady R."/>
            <person name="Ramachandran S."/>
            <person name="Dash D."/>
            <person name="Pandey A."/>
        </authorList>
    </citation>
    <scope>IDENTIFICATION BY MASS SPECTROMETRY [LARGE SCALE ANALYSIS]</scope>
    <source>
        <strain>ATCC 25618 / H37Rv</strain>
    </source>
</reference>
<reference key="9">
    <citation type="journal article" date="2000" name="Nat. Struct. Biol.">
        <title>Crystal structure of the secreted form of antigen 85C reveals potential targets for mycobacterial drugs and vaccines.</title>
        <authorList>
            <person name="Ronning D.R."/>
            <person name="Klabunde T."/>
            <person name="Besra G.S."/>
            <person name="Vissa V.D."/>
            <person name="Belisle J.T."/>
            <person name="Sacchettini J.C."/>
        </authorList>
    </citation>
    <scope>X-RAY CRYSTALLOGRAPHY (1.5 ANGSTROMS) OF 47-328 IN COMPLEX WITH SUBSTRATE ANALOGS</scope>
    <scope>ACTIVE SITE</scope>
    <scope>REACTION MECHANISM</scope>
    <scope>SUBUNIT</scope>
</reference>
<reference key="10">
    <citation type="journal article" date="2004" name="J. Biol. Chem.">
        <title>Mycobacterium tuberculosis antigen 85A and 85C structures confirm binding orientation and conserved substrate specificity.</title>
        <authorList>
            <person name="Ronning D.R."/>
            <person name="Vissa V."/>
            <person name="Besra G.S."/>
            <person name="Belisle J.T."/>
            <person name="Sacchettini J.C."/>
        </authorList>
    </citation>
    <scope>X-RAY CRYSTALLOGRAPHY (2.02 ANGSTROMS) OF 47-340 IN COMPLEX WITH SUBSTRATE ANALOG</scope>
    <scope>SUBUNIT</scope>
</reference>
<reference key="11">
    <citation type="journal article" date="2009" name="Mol. Biosyst.">
        <title>Design, synthesis and biological evaluation of sugar-derived esters, alpha-ketoesters and alpha-ketoamides as inhibitors for Mycobacterium tuberculosis antigen 85C.</title>
        <authorList>
            <person name="Sanki A.K."/>
            <person name="Boucau J."/>
            <person name="Umesiri F.E."/>
            <person name="Ronning D.R."/>
            <person name="Sucheck S.J."/>
        </authorList>
    </citation>
    <scope>X-RAY CRYSTALLOGRAPHY (2.3 ANGSTROMS) OF 47-340</scope>
    <scope>SUBUNIT</scope>
</reference>
<sequence length="340" mass="36771">MTFFEQVRRLRSAATTLPRRLAIAAMGAVLVYGLVGTFGGPATAGAFSRPGLPVEYLQVPSASMGRDIKVQFQGGGPHAVYLLDGLRAQDDYNGWDINTPAFEEYYQSGLSVIMPVGGQSSFYTDWYQPSQSNGQNYTYKWETFLTREMPAWLQANKGVSPTGNAAVGLSMSGGSALILAAYYPQQFPYAASLSGFLNPSEGWWPTLIGLAMNDSGGYNANSMWGPSSDPAWKRNDPMVQIPRLVANNTRIWVYCGNGTPSDLGGDNIPAKFLEGLTLRTNQTFRDTYAADGGRNGVFNFPPNGTHSWPYWNEQLVAMKADIQHVLNGATPPAAPAAPAA</sequence>
<feature type="signal peptide" evidence="2">
    <location>
        <begin position="1"/>
        <end position="45"/>
    </location>
</feature>
<feature type="chain" id="PRO_0000000226" description="Diacylglycerol acyltransferase/mycolyltransferase Ag85C">
    <location>
        <begin position="46"/>
        <end position="340"/>
    </location>
</feature>
<feature type="region of interest" description="Fibronectin-binding">
    <location>
        <begin position="102"/>
        <end position="112"/>
    </location>
</feature>
<feature type="active site" description="Nucleophile" evidence="4">
    <location>
        <position position="170"/>
    </location>
</feature>
<feature type="active site" evidence="4">
    <location>
        <position position="274"/>
    </location>
</feature>
<feature type="active site" evidence="4">
    <location>
        <position position="306"/>
    </location>
</feature>
<feature type="binding site">
    <location>
        <begin position="86"/>
        <end position="87"/>
    </location>
    <ligand>
        <name>substrate</name>
    </ligand>
</feature>
<feature type="binding site" evidence="1">
    <location>
        <position position="170"/>
    </location>
    <ligand>
        <name>substrate</name>
    </ligand>
</feature>
<feature type="binding site" evidence="1">
    <location>
        <position position="198"/>
    </location>
    <ligand>
        <name>substrate</name>
    </ligand>
</feature>
<feature type="binding site" evidence="1">
    <location>
        <begin position="276"/>
        <end position="279"/>
    </location>
    <ligand>
        <name>substrate</name>
    </ligand>
</feature>
<feature type="binding site" evidence="1">
    <location>
        <position position="283"/>
    </location>
    <ligand>
        <name>substrate</name>
    </ligand>
</feature>
<feature type="binding site" evidence="1">
    <location>
        <begin position="306"/>
        <end position="308"/>
    </location>
    <ligand>
        <name>substrate</name>
    </ligand>
</feature>
<feature type="mutagenesis site" description="Do not form alpha,alpha-trehalose dimycolate (TDM, cord factor) and alpha,alpha-trehalose monomycolate (TMM)." evidence="8">
    <original>S</original>
    <variation>A</variation>
    <location>
        <position position="170"/>
    </location>
</feature>
<feature type="sequence conflict" description="In Ref. 1; CAA40506." evidence="9" ref="1">
    <original>L</original>
    <variation>V</variation>
    <location>
        <position position="21"/>
    </location>
</feature>
<feature type="strand" evidence="11">
    <location>
        <begin position="54"/>
        <end position="61"/>
    </location>
</feature>
<feature type="turn" evidence="11">
    <location>
        <begin position="62"/>
        <end position="65"/>
    </location>
</feature>
<feature type="strand" evidence="11">
    <location>
        <begin position="66"/>
        <end position="73"/>
    </location>
</feature>
<feature type="strand" evidence="11">
    <location>
        <begin position="75"/>
        <end position="82"/>
    </location>
</feature>
<feature type="strand" evidence="11">
    <location>
        <begin position="90"/>
        <end position="92"/>
    </location>
</feature>
<feature type="helix" evidence="11">
    <location>
        <begin position="94"/>
        <end position="98"/>
    </location>
</feature>
<feature type="helix" evidence="11">
    <location>
        <begin position="101"/>
        <end position="105"/>
    </location>
</feature>
<feature type="turn" evidence="13">
    <location>
        <begin position="106"/>
        <end position="109"/>
    </location>
</feature>
<feature type="strand" evidence="11">
    <location>
        <begin position="111"/>
        <end position="115"/>
    </location>
</feature>
<feature type="strand" evidence="11">
    <location>
        <begin position="127"/>
        <end position="129"/>
    </location>
</feature>
<feature type="turn" evidence="11">
    <location>
        <begin position="131"/>
        <end position="134"/>
    </location>
</feature>
<feature type="helix" evidence="11">
    <location>
        <begin position="141"/>
        <end position="146"/>
    </location>
</feature>
<feature type="helix" evidence="11">
    <location>
        <begin position="148"/>
        <end position="157"/>
    </location>
</feature>
<feature type="strand" evidence="11">
    <location>
        <begin position="161"/>
        <end position="163"/>
    </location>
</feature>
<feature type="strand" evidence="11">
    <location>
        <begin position="165"/>
        <end position="169"/>
    </location>
</feature>
<feature type="helix" evidence="11">
    <location>
        <begin position="172"/>
        <end position="182"/>
    </location>
</feature>
<feature type="turn" evidence="11">
    <location>
        <begin position="184"/>
        <end position="186"/>
    </location>
</feature>
<feature type="strand" evidence="11">
    <location>
        <begin position="188"/>
        <end position="194"/>
    </location>
</feature>
<feature type="helix" evidence="11">
    <location>
        <begin position="204"/>
        <end position="214"/>
    </location>
</feature>
<feature type="turn" evidence="10">
    <location>
        <begin position="215"/>
        <end position="217"/>
    </location>
</feature>
<feature type="helix" evidence="11">
    <location>
        <begin position="220"/>
        <end position="224"/>
    </location>
</feature>
<feature type="helix" evidence="11">
    <location>
        <begin position="230"/>
        <end position="234"/>
    </location>
</feature>
<feature type="turn" evidence="11">
    <location>
        <begin position="237"/>
        <end position="240"/>
    </location>
</feature>
<feature type="helix" evidence="11">
    <location>
        <begin position="241"/>
        <end position="246"/>
    </location>
</feature>
<feature type="strand" evidence="11">
    <location>
        <begin position="250"/>
        <end position="254"/>
    </location>
</feature>
<feature type="strand" evidence="11">
    <location>
        <begin position="258"/>
        <end position="260"/>
    </location>
</feature>
<feature type="helix" evidence="11">
    <location>
        <begin position="272"/>
        <end position="290"/>
    </location>
</feature>
<feature type="strand" evidence="11">
    <location>
        <begin position="295"/>
        <end position="299"/>
    </location>
</feature>
<feature type="strand" evidence="12">
    <location>
        <begin position="305"/>
        <end position="307"/>
    </location>
</feature>
<feature type="helix" evidence="11">
    <location>
        <begin position="308"/>
        <end position="317"/>
    </location>
</feature>
<feature type="helix" evidence="11">
    <location>
        <begin position="319"/>
        <end position="326"/>
    </location>
</feature>
<name>A85C_MYCTU</name>
<dbReference type="EC" id="2.3.1.122"/>
<dbReference type="EC" id="2.3.1.20"/>
<dbReference type="EMBL" id="X57229">
    <property type="protein sequence ID" value="CAA40506.1"/>
    <property type="molecule type" value="Genomic_DNA"/>
</dbReference>
<dbReference type="EMBL" id="AL123456">
    <property type="protein sequence ID" value="CCP42854.1"/>
    <property type="molecule type" value="Genomic_DNA"/>
</dbReference>
<dbReference type="PIR" id="D70615">
    <property type="entry name" value="D70615"/>
</dbReference>
<dbReference type="RefSeq" id="WP_003400908.1">
    <property type="nucleotide sequence ID" value="NZ_NVQJ01000001.1"/>
</dbReference>
<dbReference type="RefSeq" id="YP_177694.1">
    <property type="nucleotide sequence ID" value="NC_000962.3"/>
</dbReference>
<dbReference type="PDB" id="1DQY">
    <property type="method" value="X-ray"/>
    <property type="resolution" value="1.83 A"/>
    <property type="chains" value="A=47-328"/>
</dbReference>
<dbReference type="PDB" id="1DQZ">
    <property type="method" value="X-ray"/>
    <property type="resolution" value="1.50 A"/>
    <property type="chains" value="A/B=49-328"/>
</dbReference>
<dbReference type="PDB" id="1VA5">
    <property type="method" value="X-ray"/>
    <property type="resolution" value="2.02 A"/>
    <property type="chains" value="A/B=47-340"/>
</dbReference>
<dbReference type="PDB" id="3HRH">
    <property type="method" value="X-ray"/>
    <property type="resolution" value="2.30 A"/>
    <property type="chains" value="A/B=47-340"/>
</dbReference>
<dbReference type="PDB" id="4MQL">
    <property type="method" value="X-ray"/>
    <property type="resolution" value="1.30 A"/>
    <property type="chains" value="A=46-340"/>
</dbReference>
<dbReference type="PDB" id="4MQM">
    <property type="method" value="X-ray"/>
    <property type="resolution" value="1.35 A"/>
    <property type="chains" value="A=46-340"/>
</dbReference>
<dbReference type="PDB" id="4QDO">
    <property type="method" value="X-ray"/>
    <property type="resolution" value="1.90 A"/>
    <property type="chains" value="A=46-340"/>
</dbReference>
<dbReference type="PDB" id="4QDT">
    <property type="method" value="X-ray"/>
    <property type="resolution" value="1.50 A"/>
    <property type="chains" value="A=46-340"/>
</dbReference>
<dbReference type="PDB" id="4QDU">
    <property type="method" value="X-ray"/>
    <property type="resolution" value="1.40 A"/>
    <property type="chains" value="A=46-340"/>
</dbReference>
<dbReference type="PDB" id="4QDX">
    <property type="method" value="X-ray"/>
    <property type="resolution" value="1.50 A"/>
    <property type="chains" value="A=46-340"/>
</dbReference>
<dbReference type="PDB" id="4QDZ">
    <property type="method" value="X-ray"/>
    <property type="resolution" value="1.88 A"/>
    <property type="chains" value="A=46-340"/>
</dbReference>
<dbReference type="PDB" id="4QE3">
    <property type="method" value="X-ray"/>
    <property type="resolution" value="1.35 A"/>
    <property type="chains" value="A=46-340"/>
</dbReference>
<dbReference type="PDB" id="4QEK">
    <property type="method" value="X-ray"/>
    <property type="resolution" value="1.30 A"/>
    <property type="chains" value="A=46-340"/>
</dbReference>
<dbReference type="PDB" id="5KWI">
    <property type="method" value="X-ray"/>
    <property type="resolution" value="1.30 A"/>
    <property type="chains" value="A=47-340"/>
</dbReference>
<dbReference type="PDB" id="5KWJ">
    <property type="method" value="X-ray"/>
    <property type="resolution" value="2.01 A"/>
    <property type="chains" value="A/B=47-340"/>
</dbReference>
<dbReference type="PDB" id="5OCJ">
    <property type="method" value="X-ray"/>
    <property type="resolution" value="1.80 A"/>
    <property type="chains" value="A/B=47-340"/>
</dbReference>
<dbReference type="PDB" id="5VNS">
    <property type="method" value="X-ray"/>
    <property type="resolution" value="1.45 A"/>
    <property type="chains" value="A=47-340"/>
</dbReference>
<dbReference type="PDB" id="7MYG">
    <property type="method" value="X-ray"/>
    <property type="resolution" value="2.51 A"/>
    <property type="chains" value="A/B=51-328"/>
</dbReference>
<dbReference type="PDBsum" id="1DQY"/>
<dbReference type="PDBsum" id="1DQZ"/>
<dbReference type="PDBsum" id="1VA5"/>
<dbReference type="PDBsum" id="3HRH"/>
<dbReference type="PDBsum" id="4MQL"/>
<dbReference type="PDBsum" id="4MQM"/>
<dbReference type="PDBsum" id="4QDO"/>
<dbReference type="PDBsum" id="4QDT"/>
<dbReference type="PDBsum" id="4QDU"/>
<dbReference type="PDBsum" id="4QDX"/>
<dbReference type="PDBsum" id="4QDZ"/>
<dbReference type="PDBsum" id="4QE3"/>
<dbReference type="PDBsum" id="4QEK"/>
<dbReference type="PDBsum" id="5KWI"/>
<dbReference type="PDBsum" id="5KWJ"/>
<dbReference type="PDBsum" id="5OCJ"/>
<dbReference type="PDBsum" id="5VNS"/>
<dbReference type="PDBsum" id="7MYG"/>
<dbReference type="SMR" id="P9WQN9"/>
<dbReference type="FunCoup" id="P9WQN9">
    <property type="interactions" value="13"/>
</dbReference>
<dbReference type="STRING" id="83332.Rv0129c"/>
<dbReference type="BindingDB" id="P9WQN9"/>
<dbReference type="ChEMBL" id="CHEMBL4624"/>
<dbReference type="DrugBank" id="DB08558">
    <property type="generic name" value="2-HYDROXYMETHYL-6-OCTYLSULFANYL-TETRAHYDRO-PYRAN-3,4,5-TRIOL"/>
</dbReference>
<dbReference type="DrugBank" id="DB02811">
    <property type="generic name" value="Diethyl phosphonate"/>
</dbReference>
<dbReference type="ESTHER" id="myctu-a85c">
    <property type="family name" value="A85-Mycolyl-transferase"/>
</dbReference>
<dbReference type="MoonProt" id="P9WQN9"/>
<dbReference type="PaxDb" id="83332-Rv0129c"/>
<dbReference type="DNASU" id="886885"/>
<dbReference type="GeneID" id="45424095"/>
<dbReference type="GeneID" id="886885"/>
<dbReference type="KEGG" id="mtu:Rv0129c"/>
<dbReference type="KEGG" id="mtv:RVBD_0129c"/>
<dbReference type="TubercuList" id="Rv0129c"/>
<dbReference type="eggNOG" id="COG0627">
    <property type="taxonomic scope" value="Bacteria"/>
</dbReference>
<dbReference type="InParanoid" id="P9WQN9"/>
<dbReference type="OrthoDB" id="4366784at2"/>
<dbReference type="PhylomeDB" id="P9WQN9"/>
<dbReference type="BioCyc" id="MetaCyc:G185E-4246-MONOMER"/>
<dbReference type="BRENDA" id="2.3.1.122">
    <property type="organism ID" value="3445"/>
</dbReference>
<dbReference type="EvolutionaryTrace" id="P9WQN9"/>
<dbReference type="PRO" id="PR:P9WQN9"/>
<dbReference type="Proteomes" id="UP000001584">
    <property type="component" value="Chromosome"/>
</dbReference>
<dbReference type="GO" id="GO:0005576">
    <property type="term" value="C:extracellular region"/>
    <property type="evidence" value="ECO:0000314"/>
    <property type="project" value="CAFA"/>
</dbReference>
<dbReference type="GO" id="GO:0016020">
    <property type="term" value="C:membrane"/>
    <property type="evidence" value="ECO:0007669"/>
    <property type="project" value="GOC"/>
</dbReference>
<dbReference type="GO" id="GO:0009274">
    <property type="term" value="C:peptidoglycan-based cell wall"/>
    <property type="evidence" value="ECO:0000314"/>
    <property type="project" value="MTBBASE"/>
</dbReference>
<dbReference type="GO" id="GO:0016747">
    <property type="term" value="F:acyltransferase activity, transferring groups other than amino-acyl groups"/>
    <property type="evidence" value="ECO:0000314"/>
    <property type="project" value="MTBBASE"/>
</dbReference>
<dbReference type="GO" id="GO:0004144">
    <property type="term" value="F:diacylglycerol O-acyltransferase activity"/>
    <property type="evidence" value="ECO:0007669"/>
    <property type="project" value="UniProtKB-EC"/>
</dbReference>
<dbReference type="GO" id="GO:0050348">
    <property type="term" value="F:trehalose O-mycolyltransferase activity"/>
    <property type="evidence" value="ECO:0007669"/>
    <property type="project" value="UniProtKB-EC"/>
</dbReference>
<dbReference type="GO" id="GO:0035375">
    <property type="term" value="F:zymogen binding"/>
    <property type="evidence" value="ECO:0000353"/>
    <property type="project" value="CAFA"/>
</dbReference>
<dbReference type="GO" id="GO:0009247">
    <property type="term" value="P:glycolipid biosynthetic process"/>
    <property type="evidence" value="ECO:0000314"/>
    <property type="project" value="MTBBASE"/>
</dbReference>
<dbReference type="GO" id="GO:0006869">
    <property type="term" value="P:lipid transport"/>
    <property type="evidence" value="ECO:0000315"/>
    <property type="project" value="MTBBASE"/>
</dbReference>
<dbReference type="GO" id="GO:0071769">
    <property type="term" value="P:mycolate cell wall layer assembly"/>
    <property type="evidence" value="ECO:0000314"/>
    <property type="project" value="MTBBASE"/>
</dbReference>
<dbReference type="GO" id="GO:0046677">
    <property type="term" value="P:response to antibiotic"/>
    <property type="evidence" value="ECO:0000270"/>
    <property type="project" value="MTBBASE"/>
</dbReference>
<dbReference type="FunFam" id="3.40.50.1820:FF:000086">
    <property type="entry name" value="Diacylglycerol acyltransferase/mycolyltransferase Ag85C"/>
    <property type="match status" value="1"/>
</dbReference>
<dbReference type="Gene3D" id="3.40.50.1820">
    <property type="entry name" value="alpha/beta hydrolase"/>
    <property type="match status" value="1"/>
</dbReference>
<dbReference type="InterPro" id="IPR029058">
    <property type="entry name" value="AB_hydrolase_fold"/>
</dbReference>
<dbReference type="InterPro" id="IPR000801">
    <property type="entry name" value="Esterase-like"/>
</dbReference>
<dbReference type="InterPro" id="IPR050583">
    <property type="entry name" value="Mycobacterial_A85_antigen"/>
</dbReference>
<dbReference type="PANTHER" id="PTHR48098:SF1">
    <property type="entry name" value="DIACYLGLYCEROL ACYLTRANSFERASE_MYCOLYLTRANSFERASE AG85A"/>
    <property type="match status" value="1"/>
</dbReference>
<dbReference type="PANTHER" id="PTHR48098">
    <property type="entry name" value="ENTEROCHELIN ESTERASE-RELATED"/>
    <property type="match status" value="1"/>
</dbReference>
<dbReference type="Pfam" id="PF00756">
    <property type="entry name" value="Esterase"/>
    <property type="match status" value="1"/>
</dbReference>
<dbReference type="SUPFAM" id="SSF53474">
    <property type="entry name" value="alpha/beta-Hydrolases"/>
    <property type="match status" value="1"/>
</dbReference>
<comment type="function">
    <text evidence="6 8">The antigen 85 proteins (FbpA, FbpB, FbpC) are responsible for the high affinity of mycobacteria to fibronectin, a large adhesive glycoprotein, which facilitates the attachment of M.tuberculosis to murine alveolar macrophages (AMs). They also help to maintain the integrity of the cell wall by catalyzing the transfer of mycolic acids to cell wall arabinogalactan and through the synthesis of alpha,alpha-trehalose dimycolate (TDM, cord factor). They catalyze the transfer of a mycoloyl residue from one molecule of alpha,alpha-trehalose monomycolate (TMM) to another TMM, leading to the formation of TDM.</text>
</comment>
<comment type="catalytic activity">
    <reaction>
        <text>an acyl-CoA + a 1,2-diacyl-sn-glycerol = a triacyl-sn-glycerol + CoA</text>
        <dbReference type="Rhea" id="RHEA:10868"/>
        <dbReference type="ChEBI" id="CHEBI:17815"/>
        <dbReference type="ChEBI" id="CHEBI:57287"/>
        <dbReference type="ChEBI" id="CHEBI:58342"/>
        <dbReference type="ChEBI" id="CHEBI:64615"/>
        <dbReference type="EC" id="2.3.1.20"/>
    </reaction>
</comment>
<comment type="catalytic activity">
    <reaction>
        <text>2 alpha,alpha'-trehalose 6-mycolate = alpha,alpha'-trehalose 6,6'-bismycolate + alpha,alpha-trehalose</text>
        <dbReference type="Rhea" id="RHEA:23472"/>
        <dbReference type="ChEBI" id="CHEBI:16551"/>
        <dbReference type="ChEBI" id="CHEBI:18195"/>
        <dbReference type="ChEBI" id="CHEBI:18234"/>
        <dbReference type="EC" id="2.3.1.122"/>
    </reaction>
</comment>
<comment type="activity regulation">
    <text evidence="8">Inhibited by 6-azido-6-deoxy-alpha,alpha-trehalose (ADT).</text>
</comment>
<comment type="subunit">
    <text evidence="4 5 7">Homodimer.</text>
</comment>
<comment type="subcellular location">
    <subcellularLocation>
        <location evidence="1">Secreted</location>
    </subcellularLocation>
</comment>
<comment type="disruption phenotype">
    <text evidence="3">Cells lacking this gene transfer 40% fewer mycolates to the cell wall with no change in the types of mycolates esterified to arabinogalactan or in the composition of non-covalently linked mycolates. As a consequence, the diffusion of hydrophobic chenodeoxycholate and of hydrophilic glycerol through the cell envelope occurs much more rapidly in mutant cells than in wild-type.</text>
</comment>
<comment type="miscellaneous">
    <text>Was identified as a high-confidence drug target.</text>
</comment>
<comment type="similarity">
    <text evidence="9">Belongs to the mycobacterial A85 antigen family.</text>
</comment>
<gene>
    <name type="primary">fbpC</name>
    <name type="synonym">mpt45</name>
    <name type="ordered locus">Rv0129c</name>
    <name type="ORF">MTCI5.03c</name>
</gene>